<name>MURI_HAEIN</name>
<comment type="function">
    <text evidence="1">Provides the (R)-glutamate required for cell wall biosynthesis.</text>
</comment>
<comment type="catalytic activity">
    <reaction evidence="1">
        <text>L-glutamate = D-glutamate</text>
        <dbReference type="Rhea" id="RHEA:12813"/>
        <dbReference type="ChEBI" id="CHEBI:29985"/>
        <dbReference type="ChEBI" id="CHEBI:29986"/>
        <dbReference type="EC" id="5.1.1.3"/>
    </reaction>
</comment>
<comment type="pathway">
    <text evidence="1">Cell wall biogenesis; peptidoglycan biosynthesis.</text>
</comment>
<comment type="similarity">
    <text evidence="1">Belongs to the aspartate/glutamate racemases family.</text>
</comment>
<organism>
    <name type="scientific">Haemophilus influenzae (strain ATCC 51907 / DSM 11121 / KW20 / Rd)</name>
    <dbReference type="NCBI Taxonomy" id="71421"/>
    <lineage>
        <taxon>Bacteria</taxon>
        <taxon>Pseudomonadati</taxon>
        <taxon>Pseudomonadota</taxon>
        <taxon>Gammaproteobacteria</taxon>
        <taxon>Pasteurellales</taxon>
        <taxon>Pasteurellaceae</taxon>
        <taxon>Haemophilus</taxon>
    </lineage>
</organism>
<reference key="1">
    <citation type="journal article" date="1995" name="Science">
        <title>Whole-genome random sequencing and assembly of Haemophilus influenzae Rd.</title>
        <authorList>
            <person name="Fleischmann R.D."/>
            <person name="Adams M.D."/>
            <person name="White O."/>
            <person name="Clayton R.A."/>
            <person name="Kirkness E.F."/>
            <person name="Kerlavage A.R."/>
            <person name="Bult C.J."/>
            <person name="Tomb J.-F."/>
            <person name="Dougherty B.A."/>
            <person name="Merrick J.M."/>
            <person name="McKenney K."/>
            <person name="Sutton G.G."/>
            <person name="FitzHugh W."/>
            <person name="Fields C.A."/>
            <person name="Gocayne J.D."/>
            <person name="Scott J.D."/>
            <person name="Shirley R."/>
            <person name="Liu L.-I."/>
            <person name="Glodek A."/>
            <person name="Kelley J.M."/>
            <person name="Weidman J.F."/>
            <person name="Phillips C.A."/>
            <person name="Spriggs T."/>
            <person name="Hedblom E."/>
            <person name="Cotton M.D."/>
            <person name="Utterback T.R."/>
            <person name="Hanna M.C."/>
            <person name="Nguyen D.T."/>
            <person name="Saudek D.M."/>
            <person name="Brandon R.C."/>
            <person name="Fine L.D."/>
            <person name="Fritchman J.L."/>
            <person name="Fuhrmann J.L."/>
            <person name="Geoghagen N.S.M."/>
            <person name="Gnehm C.L."/>
            <person name="McDonald L.A."/>
            <person name="Small K.V."/>
            <person name="Fraser C.M."/>
            <person name="Smith H.O."/>
            <person name="Venter J.C."/>
        </authorList>
    </citation>
    <scope>NUCLEOTIDE SEQUENCE [LARGE SCALE GENOMIC DNA]</scope>
    <source>
        <strain>ATCC 51907 / DSM 11121 / KW20 / Rd</strain>
    </source>
</reference>
<reference key="2">
    <citation type="journal article" date="1996" name="Curr. Biol.">
        <title>Metabolism and evolution of Haemophilus influenzae deduced from a whole-genome comparison with Escherichia coli.</title>
        <authorList>
            <person name="Tatusov R.L."/>
            <person name="Mushegian A.R."/>
            <person name="Bork P."/>
            <person name="Brown N.P."/>
            <person name="Hayes W.S."/>
            <person name="Borodovsky M."/>
            <person name="Rudd K.E."/>
            <person name="Koonin E.V."/>
        </authorList>
    </citation>
    <scope>IDENTIFICATION</scope>
</reference>
<reference key="3">
    <citation type="submission" date="1998-05" db="EMBL/GenBank/DDBJ databases">
        <authorList>
            <person name="White O."/>
            <person name="Clayton R.A."/>
            <person name="Kerlavage A.R."/>
            <person name="Fleischmann R.D."/>
            <person name="Peterson J."/>
            <person name="Hickey E."/>
            <person name="Dodson R."/>
            <person name="Gwinn M."/>
        </authorList>
    </citation>
    <scope>NUCLEOTIDE SEQUENCE [GENOMIC DNA]</scope>
</reference>
<sequence>MDKKEKRPTVLFFDSGVGGFSVYREAKKLLPNWHYLYCFDNAGFPYSERKEESIIHRTLAACQLINQRYPLDAMVIACNTASTVVLPPLRAAFDIPIIGTVPAIKPASEITKTKHIGLLATKGTVKRHYIDELIDKFAQDCIVERLGTTKLVEIAEQKIRGHSVDLISLKDELSSWAGMADLDTLVLGCTHFPLIKDEIQLCLPQVKYFMEPSAAIAKRIKYLLDDKNLQAQNEKYNQMFCTAHFPEESQFKKALHLWGFESLEVIKID</sequence>
<gene>
    <name evidence="1" type="primary">murI</name>
    <name type="ordered locus">HI_1739.2</name>
</gene>
<proteinExistence type="inferred from homology"/>
<protein>
    <recommendedName>
        <fullName evidence="1">Glutamate racemase</fullName>
        <ecNumber evidence="1">5.1.1.3</ecNumber>
    </recommendedName>
</protein>
<evidence type="ECO:0000255" key="1">
    <source>
        <dbReference type="HAMAP-Rule" id="MF_00258"/>
    </source>
</evidence>
<feature type="chain" id="PRO_0000095475" description="Glutamate racemase">
    <location>
        <begin position="1"/>
        <end position="269"/>
    </location>
</feature>
<feature type="active site" description="Proton donor/acceptor" evidence="1">
    <location>
        <position position="78"/>
    </location>
</feature>
<feature type="active site" description="Proton donor/acceptor" evidence="1">
    <location>
        <position position="189"/>
    </location>
</feature>
<feature type="binding site" evidence="1">
    <location>
        <begin position="14"/>
        <end position="15"/>
    </location>
    <ligand>
        <name>substrate</name>
    </ligand>
</feature>
<feature type="binding site" evidence="1">
    <location>
        <begin position="46"/>
        <end position="47"/>
    </location>
    <ligand>
        <name>substrate</name>
    </ligand>
</feature>
<feature type="binding site" evidence="1">
    <location>
        <begin position="79"/>
        <end position="80"/>
    </location>
    <ligand>
        <name>substrate</name>
    </ligand>
</feature>
<feature type="binding site" evidence="1">
    <location>
        <begin position="190"/>
        <end position="191"/>
    </location>
    <ligand>
        <name>substrate</name>
    </ligand>
</feature>
<keyword id="KW-0133">Cell shape</keyword>
<keyword id="KW-0961">Cell wall biogenesis/degradation</keyword>
<keyword id="KW-0413">Isomerase</keyword>
<keyword id="KW-0573">Peptidoglycan synthesis</keyword>
<keyword id="KW-1185">Reference proteome</keyword>
<accession>P52973</accession>
<accession>O86245</accession>
<dbReference type="EC" id="5.1.1.3" evidence="1"/>
<dbReference type="EMBL" id="L42023">
    <property type="protein sequence ID" value="AAC23386.1"/>
    <property type="molecule type" value="Genomic_DNA"/>
</dbReference>
<dbReference type="PIR" id="T09430">
    <property type="entry name" value="T09430"/>
</dbReference>
<dbReference type="RefSeq" id="NP_439883.1">
    <property type="nucleotide sequence ID" value="NC_000907.1"/>
</dbReference>
<dbReference type="SMR" id="P52973"/>
<dbReference type="STRING" id="71421.HI_1739.2"/>
<dbReference type="EnsemblBacteria" id="AAC23386">
    <property type="protein sequence ID" value="AAC23386"/>
    <property type="gene ID" value="HI_1739.2"/>
</dbReference>
<dbReference type="KEGG" id="hin:HI_1739.2"/>
<dbReference type="PATRIC" id="fig|71421.8.peg.1822"/>
<dbReference type="eggNOG" id="COG0796">
    <property type="taxonomic scope" value="Bacteria"/>
</dbReference>
<dbReference type="HOGENOM" id="CLU_052344_2_0_6"/>
<dbReference type="OrthoDB" id="9801055at2"/>
<dbReference type="PhylomeDB" id="P52973"/>
<dbReference type="BioCyc" id="HINF71421:G1GJ1-1762-MONOMER"/>
<dbReference type="UniPathway" id="UPA00219"/>
<dbReference type="Proteomes" id="UP000000579">
    <property type="component" value="Chromosome"/>
</dbReference>
<dbReference type="GO" id="GO:0008881">
    <property type="term" value="F:glutamate racemase activity"/>
    <property type="evidence" value="ECO:0000318"/>
    <property type="project" value="GO_Central"/>
</dbReference>
<dbReference type="GO" id="GO:0071555">
    <property type="term" value="P:cell wall organization"/>
    <property type="evidence" value="ECO:0007669"/>
    <property type="project" value="UniProtKB-KW"/>
</dbReference>
<dbReference type="GO" id="GO:0009252">
    <property type="term" value="P:peptidoglycan biosynthetic process"/>
    <property type="evidence" value="ECO:0000318"/>
    <property type="project" value="GO_Central"/>
</dbReference>
<dbReference type="GO" id="GO:0008360">
    <property type="term" value="P:regulation of cell shape"/>
    <property type="evidence" value="ECO:0007669"/>
    <property type="project" value="UniProtKB-KW"/>
</dbReference>
<dbReference type="FunFam" id="3.40.50.1860:FF:000001">
    <property type="entry name" value="Glutamate racemase"/>
    <property type="match status" value="1"/>
</dbReference>
<dbReference type="Gene3D" id="3.40.50.1860">
    <property type="match status" value="2"/>
</dbReference>
<dbReference type="HAMAP" id="MF_00258">
    <property type="entry name" value="Glu_racemase"/>
    <property type="match status" value="1"/>
</dbReference>
<dbReference type="InterPro" id="IPR015942">
    <property type="entry name" value="Asp/Glu/hydantoin_racemase"/>
</dbReference>
<dbReference type="InterPro" id="IPR001920">
    <property type="entry name" value="Asp/Glu_race"/>
</dbReference>
<dbReference type="InterPro" id="IPR018187">
    <property type="entry name" value="Asp/Glu_racemase_AS_1"/>
</dbReference>
<dbReference type="InterPro" id="IPR033134">
    <property type="entry name" value="Asp/Glu_racemase_AS_2"/>
</dbReference>
<dbReference type="InterPro" id="IPR004391">
    <property type="entry name" value="Glu_race"/>
</dbReference>
<dbReference type="NCBIfam" id="TIGR00067">
    <property type="entry name" value="glut_race"/>
    <property type="match status" value="1"/>
</dbReference>
<dbReference type="PANTHER" id="PTHR21198">
    <property type="entry name" value="GLUTAMATE RACEMASE"/>
    <property type="match status" value="1"/>
</dbReference>
<dbReference type="PANTHER" id="PTHR21198:SF2">
    <property type="entry name" value="GLUTAMATE RACEMASE"/>
    <property type="match status" value="1"/>
</dbReference>
<dbReference type="Pfam" id="PF01177">
    <property type="entry name" value="Asp_Glu_race"/>
    <property type="match status" value="1"/>
</dbReference>
<dbReference type="SUPFAM" id="SSF53681">
    <property type="entry name" value="Aspartate/glutamate racemase"/>
    <property type="match status" value="2"/>
</dbReference>
<dbReference type="PROSITE" id="PS00923">
    <property type="entry name" value="ASP_GLU_RACEMASE_1"/>
    <property type="match status" value="1"/>
</dbReference>
<dbReference type="PROSITE" id="PS00924">
    <property type="entry name" value="ASP_GLU_RACEMASE_2"/>
    <property type="match status" value="1"/>
</dbReference>